<feature type="chain" id="PRO_0000144669" description="A-type ATP synthase subunit B">
    <location>
        <begin position="1"/>
        <end position="460"/>
    </location>
</feature>
<accession>Q9HM64</accession>
<name>AATB_THEAC</name>
<dbReference type="EMBL" id="AL445063">
    <property type="protein sequence ID" value="CAC11154.1"/>
    <property type="status" value="ALT_INIT"/>
    <property type="molecule type" value="Genomic_DNA"/>
</dbReference>
<dbReference type="RefSeq" id="WP_048161381.1">
    <property type="nucleotide sequence ID" value="NC_002578.1"/>
</dbReference>
<dbReference type="SMR" id="Q9HM64"/>
<dbReference type="FunCoup" id="Q9HM64">
    <property type="interactions" value="80"/>
</dbReference>
<dbReference type="MINT" id="Q9HM64"/>
<dbReference type="STRING" id="273075.gene:9571220"/>
<dbReference type="PaxDb" id="273075-Ta0005"/>
<dbReference type="EnsemblBacteria" id="CAC11154">
    <property type="protein sequence ID" value="CAC11154"/>
    <property type="gene ID" value="CAC11154"/>
</dbReference>
<dbReference type="KEGG" id="tac:Ta0005"/>
<dbReference type="eggNOG" id="arCOG00865">
    <property type="taxonomic scope" value="Archaea"/>
</dbReference>
<dbReference type="HOGENOM" id="CLU_022916_0_0_2"/>
<dbReference type="InParanoid" id="Q9HM64"/>
<dbReference type="OrthoDB" id="32941at2157"/>
<dbReference type="Proteomes" id="UP000001024">
    <property type="component" value="Chromosome"/>
</dbReference>
<dbReference type="GO" id="GO:0005886">
    <property type="term" value="C:plasma membrane"/>
    <property type="evidence" value="ECO:0007669"/>
    <property type="project" value="UniProtKB-SubCell"/>
</dbReference>
<dbReference type="GO" id="GO:0005524">
    <property type="term" value="F:ATP binding"/>
    <property type="evidence" value="ECO:0007669"/>
    <property type="project" value="UniProtKB-UniRule"/>
</dbReference>
<dbReference type="GO" id="GO:0046933">
    <property type="term" value="F:proton-transporting ATP synthase activity, rotational mechanism"/>
    <property type="evidence" value="ECO:0007669"/>
    <property type="project" value="UniProtKB-UniRule"/>
</dbReference>
<dbReference type="GO" id="GO:0042777">
    <property type="term" value="P:proton motive force-driven plasma membrane ATP synthesis"/>
    <property type="evidence" value="ECO:0007669"/>
    <property type="project" value="UniProtKB-UniRule"/>
</dbReference>
<dbReference type="CDD" id="cd18112">
    <property type="entry name" value="ATP-synt_V_A-type_beta_C"/>
    <property type="match status" value="1"/>
</dbReference>
<dbReference type="CDD" id="cd18118">
    <property type="entry name" value="ATP-synt_V_A-type_beta_N"/>
    <property type="match status" value="1"/>
</dbReference>
<dbReference type="CDD" id="cd01135">
    <property type="entry name" value="V_A-ATPase_B"/>
    <property type="match status" value="1"/>
</dbReference>
<dbReference type="Gene3D" id="3.40.50.12240">
    <property type="match status" value="1"/>
</dbReference>
<dbReference type="HAMAP" id="MF_00310">
    <property type="entry name" value="ATP_synth_B_arch"/>
    <property type="match status" value="1"/>
</dbReference>
<dbReference type="InterPro" id="IPR055190">
    <property type="entry name" value="ATP-synt_VA_C"/>
</dbReference>
<dbReference type="InterPro" id="IPR004100">
    <property type="entry name" value="ATPase_F1/V1/A1_a/bsu_N"/>
</dbReference>
<dbReference type="InterPro" id="IPR000194">
    <property type="entry name" value="ATPase_F1/V1/A1_a/bsu_nucl-bd"/>
</dbReference>
<dbReference type="InterPro" id="IPR027417">
    <property type="entry name" value="P-loop_NTPase"/>
</dbReference>
<dbReference type="InterPro" id="IPR022879">
    <property type="entry name" value="V-ATPase_su_B/beta"/>
</dbReference>
<dbReference type="NCBIfam" id="NF003235">
    <property type="entry name" value="PRK04196.1"/>
    <property type="match status" value="1"/>
</dbReference>
<dbReference type="PANTHER" id="PTHR43389">
    <property type="entry name" value="V-TYPE PROTON ATPASE SUBUNIT B"/>
    <property type="match status" value="1"/>
</dbReference>
<dbReference type="PANTHER" id="PTHR43389:SF4">
    <property type="entry name" value="V-TYPE PROTON ATPASE SUBUNIT B"/>
    <property type="match status" value="1"/>
</dbReference>
<dbReference type="Pfam" id="PF00006">
    <property type="entry name" value="ATP-synt_ab"/>
    <property type="match status" value="1"/>
</dbReference>
<dbReference type="Pfam" id="PF02874">
    <property type="entry name" value="ATP-synt_ab_N"/>
    <property type="match status" value="1"/>
</dbReference>
<dbReference type="Pfam" id="PF22919">
    <property type="entry name" value="ATP-synt_VA_C"/>
    <property type="match status" value="1"/>
</dbReference>
<dbReference type="PIRSF" id="PIRSF039114">
    <property type="entry name" value="V-ATPsynth_beta/V-ATPase_B"/>
    <property type="match status" value="1"/>
</dbReference>
<dbReference type="SUPFAM" id="SSF47917">
    <property type="entry name" value="C-terminal domain of alpha and beta subunits of F1 ATP synthase"/>
    <property type="match status" value="1"/>
</dbReference>
<dbReference type="SUPFAM" id="SSF52540">
    <property type="entry name" value="P-loop containing nucleoside triphosphate hydrolases"/>
    <property type="match status" value="1"/>
</dbReference>
<protein>
    <recommendedName>
        <fullName evidence="1">A-type ATP synthase subunit B</fullName>
    </recommendedName>
</protein>
<organism>
    <name type="scientific">Thermoplasma acidophilum (strain ATCC 25905 / DSM 1728 / JCM 9062 / NBRC 15155 / AMRC-C165)</name>
    <dbReference type="NCBI Taxonomy" id="273075"/>
    <lineage>
        <taxon>Archaea</taxon>
        <taxon>Methanobacteriati</taxon>
        <taxon>Thermoplasmatota</taxon>
        <taxon>Thermoplasmata</taxon>
        <taxon>Thermoplasmatales</taxon>
        <taxon>Thermoplasmataceae</taxon>
        <taxon>Thermoplasma</taxon>
    </lineage>
</organism>
<proteinExistence type="inferred from homology"/>
<gene>
    <name evidence="1" type="primary">atpB</name>
    <name type="ordered locus">Ta0005</name>
</gene>
<reference key="1">
    <citation type="journal article" date="2000" name="Nature">
        <title>The genome sequence of the thermoacidophilic scavenger Thermoplasma acidophilum.</title>
        <authorList>
            <person name="Ruepp A."/>
            <person name="Graml W."/>
            <person name="Santos-Martinez M.-L."/>
            <person name="Koretke K.K."/>
            <person name="Volker C."/>
            <person name="Mewes H.-W."/>
            <person name="Frishman D."/>
            <person name="Stocker S."/>
            <person name="Lupas A.N."/>
            <person name="Baumeister W."/>
        </authorList>
    </citation>
    <scope>NUCLEOTIDE SEQUENCE [LARGE SCALE GENOMIC DNA]</scope>
    <source>
        <strain>ATCC 25905 / DSM 1728 / JCM 9062 / NBRC 15155 / AMRC-C165</strain>
    </source>
</reference>
<comment type="function">
    <text evidence="1">Component of the A-type ATP synthase that produces ATP from ADP in the presence of a proton gradient across the membrane. The B chain is a regulatory subunit.</text>
</comment>
<comment type="subunit">
    <text evidence="1">Has multiple subunits with at least A(3), B(3), C, D, E, F, H, I and proteolipid K(x).</text>
</comment>
<comment type="subcellular location">
    <subcellularLocation>
        <location evidence="1">Cell membrane</location>
        <topology evidence="1">Peripheral membrane protein</topology>
    </subcellularLocation>
</comment>
<comment type="similarity">
    <text evidence="1">Belongs to the ATPase alpha/beta chains family.</text>
</comment>
<comment type="sequence caution" evidence="2">
    <conflict type="erroneous initiation">
        <sequence resource="EMBL-CDS" id="CAC11154"/>
    </conflict>
</comment>
<evidence type="ECO:0000255" key="1">
    <source>
        <dbReference type="HAMAP-Rule" id="MF_00310"/>
    </source>
</evidence>
<evidence type="ECO:0000305" key="2"/>
<sequence length="460" mass="51006">MPKLAYKSVSQISGPLLFVENVPNAAYNEMVDIELENGETRQGQVLDTRKGLAIVQIFGATTGIGTQGTTVKFRGETARLPISEDMLGRVFNGIGEPIDGGPEIIAKERMEITSNAINPYSREEPSEFIETGISAIDGMNTLVRGQKLPIFSGSGLPHNQLAAQIARQAKVLDSSENFAVVFGAMGITSEEANYFTNQFRETGALSRSVMFLNLSSDPSMERIILPRIALTTAEYLAFQKGMHILVILTDMTNYCEALREISAAREEVPGRRGYPGYMYTDLSTIYERAGKLKGNNGSITQIPILTMPGDDITHPVPDLTGYITEGQIVISRDLNRKDMYPGIDVLLSLSRLMNQGIGKGRTREDHRGLADQLYAAYASGKDLRSLTAIVGEEALSQNDRKYLHFADTFESRYIKQGFFEDRSIEDTLGLGWDLLADLPVQDMKRVKPDHIQKYGRWKKE</sequence>
<keyword id="KW-0066">ATP synthesis</keyword>
<keyword id="KW-1003">Cell membrane</keyword>
<keyword id="KW-0375">Hydrogen ion transport</keyword>
<keyword id="KW-0406">Ion transport</keyword>
<keyword id="KW-0472">Membrane</keyword>
<keyword id="KW-1185">Reference proteome</keyword>
<keyword id="KW-0813">Transport</keyword>